<dbReference type="EC" id="5.4.3.8" evidence="1"/>
<dbReference type="EMBL" id="CP000474">
    <property type="protein sequence ID" value="ABM08891.1"/>
    <property type="molecule type" value="Genomic_DNA"/>
</dbReference>
<dbReference type="RefSeq" id="WP_011775401.1">
    <property type="nucleotide sequence ID" value="NC_008711.1"/>
</dbReference>
<dbReference type="SMR" id="A1R898"/>
<dbReference type="STRING" id="290340.AAur_2747"/>
<dbReference type="KEGG" id="aau:AAur_2747"/>
<dbReference type="eggNOG" id="COG0001">
    <property type="taxonomic scope" value="Bacteria"/>
</dbReference>
<dbReference type="HOGENOM" id="CLU_016922_1_5_11"/>
<dbReference type="OrthoDB" id="9801052at2"/>
<dbReference type="UniPathway" id="UPA00251">
    <property type="reaction ID" value="UER00317"/>
</dbReference>
<dbReference type="Proteomes" id="UP000000637">
    <property type="component" value="Chromosome"/>
</dbReference>
<dbReference type="GO" id="GO:0005737">
    <property type="term" value="C:cytoplasm"/>
    <property type="evidence" value="ECO:0007669"/>
    <property type="project" value="UniProtKB-SubCell"/>
</dbReference>
<dbReference type="GO" id="GO:0042286">
    <property type="term" value="F:glutamate-1-semialdehyde 2,1-aminomutase activity"/>
    <property type="evidence" value="ECO:0007669"/>
    <property type="project" value="UniProtKB-UniRule"/>
</dbReference>
<dbReference type="GO" id="GO:0030170">
    <property type="term" value="F:pyridoxal phosphate binding"/>
    <property type="evidence" value="ECO:0007669"/>
    <property type="project" value="InterPro"/>
</dbReference>
<dbReference type="GO" id="GO:0008483">
    <property type="term" value="F:transaminase activity"/>
    <property type="evidence" value="ECO:0007669"/>
    <property type="project" value="InterPro"/>
</dbReference>
<dbReference type="GO" id="GO:0006782">
    <property type="term" value="P:protoporphyrinogen IX biosynthetic process"/>
    <property type="evidence" value="ECO:0007669"/>
    <property type="project" value="UniProtKB-UniRule"/>
</dbReference>
<dbReference type="CDD" id="cd00610">
    <property type="entry name" value="OAT_like"/>
    <property type="match status" value="1"/>
</dbReference>
<dbReference type="FunFam" id="3.40.640.10:FF:000021">
    <property type="entry name" value="Glutamate-1-semialdehyde 2,1-aminomutase"/>
    <property type="match status" value="1"/>
</dbReference>
<dbReference type="Gene3D" id="3.90.1150.10">
    <property type="entry name" value="Aspartate Aminotransferase, domain 1"/>
    <property type="match status" value="1"/>
</dbReference>
<dbReference type="Gene3D" id="3.40.640.10">
    <property type="entry name" value="Type I PLP-dependent aspartate aminotransferase-like (Major domain)"/>
    <property type="match status" value="1"/>
</dbReference>
<dbReference type="HAMAP" id="MF_00375">
    <property type="entry name" value="HemL_aminotrans_3"/>
    <property type="match status" value="1"/>
</dbReference>
<dbReference type="InterPro" id="IPR004639">
    <property type="entry name" value="4pyrrol_synth_GluAld_NH2Trfase"/>
</dbReference>
<dbReference type="InterPro" id="IPR005814">
    <property type="entry name" value="Aminotrans_3"/>
</dbReference>
<dbReference type="InterPro" id="IPR049704">
    <property type="entry name" value="Aminotrans_3_PPA_site"/>
</dbReference>
<dbReference type="InterPro" id="IPR015424">
    <property type="entry name" value="PyrdxlP-dep_Trfase"/>
</dbReference>
<dbReference type="InterPro" id="IPR015421">
    <property type="entry name" value="PyrdxlP-dep_Trfase_major"/>
</dbReference>
<dbReference type="InterPro" id="IPR015422">
    <property type="entry name" value="PyrdxlP-dep_Trfase_small"/>
</dbReference>
<dbReference type="NCBIfam" id="TIGR00713">
    <property type="entry name" value="hemL"/>
    <property type="match status" value="1"/>
</dbReference>
<dbReference type="NCBIfam" id="NF000818">
    <property type="entry name" value="PRK00062.1"/>
    <property type="match status" value="1"/>
</dbReference>
<dbReference type="PANTHER" id="PTHR43713">
    <property type="entry name" value="GLUTAMATE-1-SEMIALDEHYDE 2,1-AMINOMUTASE"/>
    <property type="match status" value="1"/>
</dbReference>
<dbReference type="PANTHER" id="PTHR43713:SF3">
    <property type="entry name" value="GLUTAMATE-1-SEMIALDEHYDE 2,1-AMINOMUTASE 1, CHLOROPLASTIC-RELATED"/>
    <property type="match status" value="1"/>
</dbReference>
<dbReference type="Pfam" id="PF00202">
    <property type="entry name" value="Aminotran_3"/>
    <property type="match status" value="1"/>
</dbReference>
<dbReference type="SUPFAM" id="SSF53383">
    <property type="entry name" value="PLP-dependent transferases"/>
    <property type="match status" value="1"/>
</dbReference>
<dbReference type="PROSITE" id="PS00600">
    <property type="entry name" value="AA_TRANSFER_CLASS_3"/>
    <property type="match status" value="1"/>
</dbReference>
<proteinExistence type="inferred from homology"/>
<reference key="1">
    <citation type="journal article" date="2006" name="PLoS Genet.">
        <title>Secrets of soil survival revealed by the genome sequence of Arthrobacter aurescens TC1.</title>
        <authorList>
            <person name="Mongodin E.F."/>
            <person name="Shapir N."/>
            <person name="Daugherty S.C."/>
            <person name="DeBoy R.T."/>
            <person name="Emerson J.B."/>
            <person name="Shvartzbeyn A."/>
            <person name="Radune D."/>
            <person name="Vamathevan J."/>
            <person name="Riggs F."/>
            <person name="Grinberg V."/>
            <person name="Khouri H.M."/>
            <person name="Wackett L.P."/>
            <person name="Nelson K.E."/>
            <person name="Sadowsky M.J."/>
        </authorList>
    </citation>
    <scope>NUCLEOTIDE SEQUENCE [LARGE SCALE GENOMIC DNA]</scope>
    <source>
        <strain>TC1</strain>
    </source>
</reference>
<accession>A1R898</accession>
<sequence length="439" mass="45011">MTSNTPVSDQLFDRARSLMPGGVNSPVRAFGSVGGTPKFMVSAKGAYLTDADGKEYVDLVCSWGPALLGHAHPAVLDAVHAAVDRGLSFGASTPDEANLAAIVKDRVSAVERLRMVSTGTEATMTAVRLARGFTGRNLIIKFAGCYHGHLDGLLAAAGSGVATLALPGSAGVTEATAAETLVLPYNDLAAVEAAFAAHGKNIAAVITEAAPANMGVVTPGEGFNAGLSRITKEHGALLILDEVLTGFRTGYAGYWGLTGRQEGWAPDLLTFGKVIGGGMPTAALGGRADVMDYLAPVGPVYQAGTLSGNPVAMAAGVATLTNATPEVYAYVDARSLELSAALSSALDAAGVDHSIQRAGNLFSVAFGTSAHGVHNYDDAQRQESFRYAPFFHSMLDSGVYLPPSVFEAWFLSAAHDDAAMNRIVDALPAAAKAAAGASA</sequence>
<comment type="catalytic activity">
    <reaction evidence="1">
        <text>(S)-4-amino-5-oxopentanoate = 5-aminolevulinate</text>
        <dbReference type="Rhea" id="RHEA:14265"/>
        <dbReference type="ChEBI" id="CHEBI:57501"/>
        <dbReference type="ChEBI" id="CHEBI:356416"/>
        <dbReference type="EC" id="5.4.3.8"/>
    </reaction>
</comment>
<comment type="cofactor">
    <cofactor evidence="1">
        <name>pyridoxal 5'-phosphate</name>
        <dbReference type="ChEBI" id="CHEBI:597326"/>
    </cofactor>
</comment>
<comment type="pathway">
    <text evidence="1">Porphyrin-containing compound metabolism; protoporphyrin-IX biosynthesis; 5-aminolevulinate from L-glutamyl-tRNA(Glu): step 2/2.</text>
</comment>
<comment type="subunit">
    <text evidence="1">Homodimer.</text>
</comment>
<comment type="subcellular location">
    <subcellularLocation>
        <location evidence="1">Cytoplasm</location>
    </subcellularLocation>
</comment>
<comment type="similarity">
    <text evidence="1">Belongs to the class-III pyridoxal-phosphate-dependent aminotransferase family. HemL subfamily.</text>
</comment>
<evidence type="ECO:0000255" key="1">
    <source>
        <dbReference type="HAMAP-Rule" id="MF_00375"/>
    </source>
</evidence>
<name>GSA_PAEAT</name>
<feature type="chain" id="PRO_0000382253" description="Glutamate-1-semialdehyde 2,1-aminomutase">
    <location>
        <begin position="1"/>
        <end position="439"/>
    </location>
</feature>
<feature type="modified residue" description="N6-(pyridoxal phosphate)lysine" evidence="1">
    <location>
        <position position="273"/>
    </location>
</feature>
<keyword id="KW-0963">Cytoplasm</keyword>
<keyword id="KW-0413">Isomerase</keyword>
<keyword id="KW-0627">Porphyrin biosynthesis</keyword>
<keyword id="KW-0663">Pyridoxal phosphate</keyword>
<organism>
    <name type="scientific">Paenarthrobacter aurescens (strain TC1)</name>
    <dbReference type="NCBI Taxonomy" id="290340"/>
    <lineage>
        <taxon>Bacteria</taxon>
        <taxon>Bacillati</taxon>
        <taxon>Actinomycetota</taxon>
        <taxon>Actinomycetes</taxon>
        <taxon>Micrococcales</taxon>
        <taxon>Micrococcaceae</taxon>
        <taxon>Paenarthrobacter</taxon>
    </lineage>
</organism>
<protein>
    <recommendedName>
        <fullName evidence="1">Glutamate-1-semialdehyde 2,1-aminomutase</fullName>
        <shortName evidence="1">GSA</shortName>
        <ecNumber evidence="1">5.4.3.8</ecNumber>
    </recommendedName>
    <alternativeName>
        <fullName evidence="1">Glutamate-1-semialdehyde aminotransferase</fullName>
        <shortName evidence="1">GSA-AT</shortName>
    </alternativeName>
</protein>
<gene>
    <name evidence="1" type="primary">hemL</name>
    <name type="ordered locus">AAur_2747</name>
</gene>